<sequence>MQNRPIIIGVTGGSGGGKTSVSRAILSHFPDEKISMIEHDSYYKDQSHLTFEERVKTNYDHPFAFDTDLMIEQIKELLAGRPVDIPTYDYTEHTRSSKTYRQEPQDVFIVEGILVLEDKRLRDLMDIKIFVDTDDDVRIIRRIKRDMEERGRSLDSVINQYLGVVKPMYHQFIESTKRYADIVIPEGVSNTVAIDLLTTKIAKILEEARNSK</sequence>
<name>URK_STRZJ</name>
<feature type="chain" id="PRO_1000200524" description="Uridine kinase">
    <location>
        <begin position="1"/>
        <end position="212"/>
    </location>
</feature>
<feature type="binding site" evidence="1">
    <location>
        <begin position="12"/>
        <end position="19"/>
    </location>
    <ligand>
        <name>ATP</name>
        <dbReference type="ChEBI" id="CHEBI:30616"/>
    </ligand>
</feature>
<gene>
    <name evidence="1" type="primary">udk</name>
    <name type="ordered locus">SPJ_1126</name>
</gene>
<comment type="catalytic activity">
    <reaction evidence="1">
        <text>uridine + ATP = UMP + ADP + H(+)</text>
        <dbReference type="Rhea" id="RHEA:16825"/>
        <dbReference type="ChEBI" id="CHEBI:15378"/>
        <dbReference type="ChEBI" id="CHEBI:16704"/>
        <dbReference type="ChEBI" id="CHEBI:30616"/>
        <dbReference type="ChEBI" id="CHEBI:57865"/>
        <dbReference type="ChEBI" id="CHEBI:456216"/>
        <dbReference type="EC" id="2.7.1.48"/>
    </reaction>
</comment>
<comment type="catalytic activity">
    <reaction evidence="1">
        <text>cytidine + ATP = CMP + ADP + H(+)</text>
        <dbReference type="Rhea" id="RHEA:24674"/>
        <dbReference type="ChEBI" id="CHEBI:15378"/>
        <dbReference type="ChEBI" id="CHEBI:17562"/>
        <dbReference type="ChEBI" id="CHEBI:30616"/>
        <dbReference type="ChEBI" id="CHEBI:60377"/>
        <dbReference type="ChEBI" id="CHEBI:456216"/>
        <dbReference type="EC" id="2.7.1.48"/>
    </reaction>
</comment>
<comment type="pathway">
    <text evidence="1">Pyrimidine metabolism; CTP biosynthesis via salvage pathway; CTP from cytidine: step 1/3.</text>
</comment>
<comment type="pathway">
    <text evidence="1">Pyrimidine metabolism; UMP biosynthesis via salvage pathway; UMP from uridine: step 1/1.</text>
</comment>
<comment type="subcellular location">
    <subcellularLocation>
        <location evidence="1">Cytoplasm</location>
    </subcellularLocation>
</comment>
<comment type="similarity">
    <text evidence="1">Belongs to the uridine kinase family.</text>
</comment>
<organism>
    <name type="scientific">Streptococcus pneumoniae (strain JJA)</name>
    <dbReference type="NCBI Taxonomy" id="488222"/>
    <lineage>
        <taxon>Bacteria</taxon>
        <taxon>Bacillati</taxon>
        <taxon>Bacillota</taxon>
        <taxon>Bacilli</taxon>
        <taxon>Lactobacillales</taxon>
        <taxon>Streptococcaceae</taxon>
        <taxon>Streptococcus</taxon>
    </lineage>
</organism>
<reference key="1">
    <citation type="journal article" date="2010" name="Genome Biol.">
        <title>Structure and dynamics of the pan-genome of Streptococcus pneumoniae and closely related species.</title>
        <authorList>
            <person name="Donati C."/>
            <person name="Hiller N.L."/>
            <person name="Tettelin H."/>
            <person name="Muzzi A."/>
            <person name="Croucher N.J."/>
            <person name="Angiuoli S.V."/>
            <person name="Oggioni M."/>
            <person name="Dunning Hotopp J.C."/>
            <person name="Hu F.Z."/>
            <person name="Riley D.R."/>
            <person name="Covacci A."/>
            <person name="Mitchell T.J."/>
            <person name="Bentley S.D."/>
            <person name="Kilian M."/>
            <person name="Ehrlich G.D."/>
            <person name="Rappuoli R."/>
            <person name="Moxon E.R."/>
            <person name="Masignani V."/>
        </authorList>
    </citation>
    <scope>NUCLEOTIDE SEQUENCE [LARGE SCALE GENOMIC DNA]</scope>
    <source>
        <strain>JJA</strain>
    </source>
</reference>
<dbReference type="EC" id="2.7.1.48" evidence="1"/>
<dbReference type="EMBL" id="CP000919">
    <property type="protein sequence ID" value="ACO19668.1"/>
    <property type="molecule type" value="Genomic_DNA"/>
</dbReference>
<dbReference type="RefSeq" id="WP_001181378.1">
    <property type="nucleotide sequence ID" value="NC_012466.1"/>
</dbReference>
<dbReference type="SMR" id="C1CEH1"/>
<dbReference type="GeneID" id="45653496"/>
<dbReference type="KEGG" id="sjj:SPJ_1126"/>
<dbReference type="HOGENOM" id="CLU_021278_1_2_9"/>
<dbReference type="UniPathway" id="UPA00574">
    <property type="reaction ID" value="UER00637"/>
</dbReference>
<dbReference type="UniPathway" id="UPA00579">
    <property type="reaction ID" value="UER00640"/>
</dbReference>
<dbReference type="Proteomes" id="UP000002206">
    <property type="component" value="Chromosome"/>
</dbReference>
<dbReference type="GO" id="GO:0005737">
    <property type="term" value="C:cytoplasm"/>
    <property type="evidence" value="ECO:0007669"/>
    <property type="project" value="UniProtKB-SubCell"/>
</dbReference>
<dbReference type="GO" id="GO:0005524">
    <property type="term" value="F:ATP binding"/>
    <property type="evidence" value="ECO:0007669"/>
    <property type="project" value="UniProtKB-UniRule"/>
</dbReference>
<dbReference type="GO" id="GO:0043771">
    <property type="term" value="F:cytidine kinase activity"/>
    <property type="evidence" value="ECO:0007669"/>
    <property type="project" value="RHEA"/>
</dbReference>
<dbReference type="GO" id="GO:0004849">
    <property type="term" value="F:uridine kinase activity"/>
    <property type="evidence" value="ECO:0007669"/>
    <property type="project" value="UniProtKB-UniRule"/>
</dbReference>
<dbReference type="GO" id="GO:0044211">
    <property type="term" value="P:CTP salvage"/>
    <property type="evidence" value="ECO:0007669"/>
    <property type="project" value="UniProtKB-UniRule"/>
</dbReference>
<dbReference type="GO" id="GO:0044206">
    <property type="term" value="P:UMP salvage"/>
    <property type="evidence" value="ECO:0007669"/>
    <property type="project" value="UniProtKB-UniRule"/>
</dbReference>
<dbReference type="CDD" id="cd02023">
    <property type="entry name" value="UMPK"/>
    <property type="match status" value="1"/>
</dbReference>
<dbReference type="Gene3D" id="3.40.50.300">
    <property type="entry name" value="P-loop containing nucleotide triphosphate hydrolases"/>
    <property type="match status" value="1"/>
</dbReference>
<dbReference type="HAMAP" id="MF_00551">
    <property type="entry name" value="Uridine_kinase"/>
    <property type="match status" value="1"/>
</dbReference>
<dbReference type="InterPro" id="IPR027417">
    <property type="entry name" value="P-loop_NTPase"/>
</dbReference>
<dbReference type="InterPro" id="IPR006083">
    <property type="entry name" value="PRK/URK"/>
</dbReference>
<dbReference type="InterPro" id="IPR026008">
    <property type="entry name" value="Uridine_kinase"/>
</dbReference>
<dbReference type="InterPro" id="IPR000764">
    <property type="entry name" value="Uridine_kinase-like"/>
</dbReference>
<dbReference type="NCBIfam" id="NF004018">
    <property type="entry name" value="PRK05480.1"/>
    <property type="match status" value="1"/>
</dbReference>
<dbReference type="NCBIfam" id="TIGR00235">
    <property type="entry name" value="udk"/>
    <property type="match status" value="1"/>
</dbReference>
<dbReference type="PANTHER" id="PTHR10285">
    <property type="entry name" value="URIDINE KINASE"/>
    <property type="match status" value="1"/>
</dbReference>
<dbReference type="Pfam" id="PF00485">
    <property type="entry name" value="PRK"/>
    <property type="match status" value="1"/>
</dbReference>
<dbReference type="PRINTS" id="PR00988">
    <property type="entry name" value="URIDINKINASE"/>
</dbReference>
<dbReference type="SUPFAM" id="SSF52540">
    <property type="entry name" value="P-loop containing nucleoside triphosphate hydrolases"/>
    <property type="match status" value="1"/>
</dbReference>
<accession>C1CEH1</accession>
<protein>
    <recommendedName>
        <fullName evidence="1">Uridine kinase</fullName>
        <ecNumber evidence="1">2.7.1.48</ecNumber>
    </recommendedName>
    <alternativeName>
        <fullName evidence="1">Cytidine monophosphokinase</fullName>
    </alternativeName>
    <alternativeName>
        <fullName evidence="1">Uridine monophosphokinase</fullName>
    </alternativeName>
</protein>
<evidence type="ECO:0000255" key="1">
    <source>
        <dbReference type="HAMAP-Rule" id="MF_00551"/>
    </source>
</evidence>
<proteinExistence type="inferred from homology"/>
<keyword id="KW-0067">ATP-binding</keyword>
<keyword id="KW-0963">Cytoplasm</keyword>
<keyword id="KW-0418">Kinase</keyword>
<keyword id="KW-0547">Nucleotide-binding</keyword>
<keyword id="KW-0808">Transferase</keyword>